<comment type="function">
    <text evidence="1 10 11 12">Acts as a RAC1 guanine nucleotide exchange factor (GEF) and can induce membrane ruffling. Functions in cell migration, attachment and cell spreading. Promotes targeting of RAC1 to focal adhesions (By similarity). May function as a positive regulator of apoptosis. Downstream of NMDA receptors and CaMKK-CaMK1 signaling cascade, promotes the formation of spines and synapses in hippocampal neurons.</text>
</comment>
<comment type="subunit">
    <text evidence="1 2 8 9 10 12 13 16">Interacts with PAK kinases through the SH3 domain. Interacts with GIT1 and TGFB1I1. Interacts with PTK2/FAK1 and RAC1. Interacts with ITCH and PARVB (By similarity). Interacts with unphosphorylated PAK1. Interacts with SCRIB; interaction is direct and may play a role in regulation of apoptosis. Interacts with FRMPD4 (via N-terminus). Interacts with CaMK1. Interacts with BIN2. Interacts with YWHAZ (By similarity). Interacts (via PH domain) with NOX1 (via FAD-binding FR-type domain) (PubMed:16329988).</text>
</comment>
<comment type="subunit">
    <molecule>Isoform 1</molecule>
    <text evidence="15">Interacts with SNX27.</text>
</comment>
<comment type="interaction">
    <interactant intactId="EBI-717515">
        <id>Q14155</id>
    </interactant>
    <interactant intactId="EBI-518228">
        <id>P22681</id>
        <label>CBL</label>
    </interactant>
    <organismsDiffer>false</organismsDiffer>
    <experiments>9</experiments>
</comment>
<comment type="interaction">
    <interactant intactId="EBI-717515">
        <id>Q14155</id>
    </interactant>
    <interactant intactId="EBI-287394">
        <id>P60953-2</id>
        <label>CDC42</label>
    </interactant>
    <organismsDiffer>false</organismsDiffer>
    <experiments>3</experiments>
</comment>
<comment type="interaction">
    <interactant intactId="EBI-717515">
        <id>Q14155</id>
    </interactant>
    <interactant intactId="EBI-466061">
        <id>Q9Y2X7</id>
        <label>GIT1</label>
    </interactant>
    <organismsDiffer>false</organismsDiffer>
    <experiments>8</experiments>
</comment>
<comment type="interaction">
    <interactant intactId="EBI-717515">
        <id>Q14155</id>
    </interactant>
    <interactant intactId="EBI-1046878">
        <id>Q14161</id>
        <label>GIT2</label>
    </interactant>
    <organismsDiffer>false</organismsDiffer>
    <experiments>5</experiments>
</comment>
<comment type="interaction">
    <interactant intactId="EBI-717515">
        <id>Q14155</id>
    </interactant>
    <interactant intactId="EBI-5323863">
        <id>Q5S007</id>
        <label>LRRK2</label>
    </interactant>
    <organismsDiffer>false</organismsDiffer>
    <experiments>7</experiments>
</comment>
<comment type="interaction">
    <interactant intactId="EBI-717515">
        <id>Q14155</id>
    </interactant>
    <interactant intactId="EBI-748397">
        <id>P50222</id>
        <label>MEOX2</label>
    </interactant>
    <organismsDiffer>false</organismsDiffer>
    <experiments>3</experiments>
</comment>
<comment type="interaction">
    <interactant intactId="EBI-717515">
        <id>Q14155</id>
    </interactant>
    <interactant intactId="EBI-747693">
        <id>P41227</id>
        <label>NAA10</label>
    </interactant>
    <organismsDiffer>false</organismsDiffer>
    <experiments>3</experiments>
</comment>
<comment type="interaction">
    <interactant intactId="EBI-717515">
        <id>Q14155</id>
    </interactant>
    <interactant intactId="EBI-1307">
        <id>Q13153</id>
        <label>PAK1</label>
    </interactant>
    <organismsDiffer>false</organismsDiffer>
    <experiments>16</experiments>
</comment>
<comment type="interaction">
    <interactant intactId="EBI-717515">
        <id>Q14155</id>
    </interactant>
    <interactant intactId="EBI-1045887">
        <id>Q13177</id>
        <label>PAK2</label>
    </interactant>
    <organismsDiffer>false</organismsDiffer>
    <experiments>8</experiments>
</comment>
<comment type="interaction">
    <interactant intactId="EBI-717515">
        <id>Q14155</id>
    </interactant>
    <interactant intactId="EBI-302388">
        <id>P30153</id>
        <label>PPP2R1A</label>
    </interactant>
    <organismsDiffer>false</organismsDiffer>
    <experiments>3</experiments>
</comment>
<comment type="interaction">
    <interactant intactId="EBI-717515">
        <id>Q14155</id>
    </interactant>
    <interactant intactId="EBI-413628">
        <id>P63000</id>
        <label>RAC1</label>
    </interactant>
    <organismsDiffer>false</organismsDiffer>
    <experiments>8</experiments>
</comment>
<comment type="interaction">
    <interactant intactId="EBI-717515">
        <id>Q14155</id>
    </interactant>
    <interactant intactId="EBI-357345">
        <id>Q14160</id>
        <label>SCRIB</label>
    </interactant>
    <organismsDiffer>false</organismsDiffer>
    <experiments>15</experiments>
</comment>
<comment type="interaction">
    <interactant intactId="EBI-717515">
        <id>Q14155</id>
    </interactant>
    <interactant intactId="EBI-15552052">
        <id>O60880-1</id>
        <label>SH2D1A</label>
    </interactant>
    <organismsDiffer>false</organismsDiffer>
    <experiments>5</experiments>
</comment>
<comment type="interaction">
    <interactant intactId="EBI-717515">
        <id>Q14155</id>
    </interactant>
    <interactant intactId="EBI-1752330">
        <id>Q9BYB0</id>
        <label>SHANK3</label>
    </interactant>
    <organismsDiffer>false</organismsDiffer>
    <experiments>2</experiments>
</comment>
<comment type="interaction">
    <interactant intactId="EBI-717515">
        <id>Q14155</id>
    </interactant>
    <interactant intactId="EBI-2481729">
        <id>Q7Z6B7</id>
        <label>SRGAP1</label>
    </interactant>
    <organismsDiffer>false</organismsDiffer>
    <experiments>4</experiments>
</comment>
<comment type="subcellular location">
    <subcellularLocation>
        <location evidence="1">Cell junction</location>
        <location evidence="1">Focal adhesion</location>
    </subcellularLocation>
    <subcellularLocation>
        <location evidence="1">Cell projection</location>
        <location evidence="1">Ruffle</location>
    </subcellularLocation>
    <subcellularLocation>
        <location evidence="1">Cytoplasm</location>
        <location evidence="1">Cell cortex</location>
    </subcellularLocation>
    <subcellularLocation>
        <location evidence="1">Cell projection</location>
        <location evidence="1">Lamellipodium</location>
    </subcellularLocation>
    <text>Detected at cell adhesions. A small proportion is detected at focal adhesions.</text>
</comment>
<comment type="alternative products">
    <event type="alternative splicing"/>
    <isoform>
        <id>Q14155-4</id>
        <name>4</name>
        <sequence type="displayed"/>
    </isoform>
    <isoform>
        <id>Q14155-1</id>
        <name>1</name>
        <sequence type="described" ref="VSP_011032 VSP_011035"/>
    </isoform>
    <isoform>
        <id>Q14155-2</id>
        <name>2</name>
        <sequence type="described" ref="VSP_011033"/>
    </isoform>
    <isoform>
        <id>Q14155-3</id>
        <name>3</name>
        <sequence type="described" ref="VSP_011034"/>
    </isoform>
    <isoform>
        <id>Q14155-5</id>
        <name>5</name>
        <sequence type="described" ref="VSP_034639 VSP_011035"/>
    </isoform>
    <isoform>
        <id>Q14155-6</id>
        <name>6</name>
        <sequence type="described" ref="VSP_011032"/>
    </isoform>
</comment>
<comment type="PTM">
    <text evidence="1 10">Phosphorylated by PTK2/FAK1; this promotes interaction with RAC1 (By similarity). Phosphorylated on Ser-694 by CaMK1; enhancement of GEF activity and downstream activation of RAC1.</text>
</comment>
<comment type="sequence caution" evidence="22">
    <conflict type="erroneous initiation">
        <sequence resource="EMBL-CDS" id="AAH50521"/>
    </conflict>
    <text>Extended N-terminus.</text>
</comment>
<comment type="sequence caution" evidence="22">
    <conflict type="erroneous initiation">
        <sequence resource="EMBL-CDS" id="BAA09763"/>
    </conflict>
    <text>Extended N-terminus.</text>
</comment>
<comment type="sequence caution" evidence="22">
    <conflict type="erroneous initiation">
        <sequence resource="EMBL-CDS" id="CAD38906"/>
    </conflict>
    <text>Extended N-terminus.</text>
</comment>
<protein>
    <recommendedName>
        <fullName>Rho guanine nucleotide exchange factor 7</fullName>
    </recommendedName>
    <alternativeName>
        <fullName>Beta-Pix</fullName>
    </alternativeName>
    <alternativeName>
        <fullName>COOL-1</fullName>
    </alternativeName>
    <alternativeName>
        <fullName>PAK-interacting exchange factor beta</fullName>
    </alternativeName>
    <alternativeName>
        <fullName>p85</fullName>
    </alternativeName>
</protein>
<dbReference type="EMBL" id="D63476">
    <property type="protein sequence ID" value="BAA09763.2"/>
    <property type="status" value="ALT_INIT"/>
    <property type="molecule type" value="mRNA"/>
</dbReference>
<dbReference type="EMBL" id="AL834228">
    <property type="protein sequence ID" value="CAD38906.1"/>
    <property type="status" value="ALT_INIT"/>
    <property type="molecule type" value="mRNA"/>
</dbReference>
<dbReference type="EMBL" id="AL139086">
    <property type="status" value="NOT_ANNOTATED_CDS"/>
    <property type="molecule type" value="Genomic_DNA"/>
</dbReference>
<dbReference type="EMBL" id="AL390754">
    <property type="status" value="NOT_ANNOTATED_CDS"/>
    <property type="molecule type" value="Genomic_DNA"/>
</dbReference>
<dbReference type="EMBL" id="CH471085">
    <property type="protein sequence ID" value="EAX09143.1"/>
    <property type="molecule type" value="Genomic_DNA"/>
</dbReference>
<dbReference type="EMBL" id="BC033905">
    <property type="protein sequence ID" value="AAH33905.1"/>
    <property type="molecule type" value="mRNA"/>
</dbReference>
<dbReference type="EMBL" id="BC050521">
    <property type="protein sequence ID" value="AAH50521.1"/>
    <property type="status" value="ALT_INIT"/>
    <property type="molecule type" value="mRNA"/>
</dbReference>
<dbReference type="EMBL" id="BC060776">
    <property type="protein sequence ID" value="AAH60776.1"/>
    <property type="molecule type" value="mRNA"/>
</dbReference>
<dbReference type="EMBL" id="AB177849">
    <property type="protein sequence ID" value="BAD66827.1"/>
    <property type="molecule type" value="mRNA"/>
</dbReference>
<dbReference type="EMBL" id="AB075521">
    <property type="protein sequence ID" value="BAE45764.1"/>
    <property type="molecule type" value="mRNA"/>
</dbReference>
<dbReference type="CCDS" id="CCDS32009.1">
    <molecule id="Q14155-3"/>
</dbReference>
<dbReference type="CCDS" id="CCDS45068.1">
    <molecule id="Q14155-4"/>
</dbReference>
<dbReference type="CCDS" id="CCDS45069.1">
    <molecule id="Q14155-2"/>
</dbReference>
<dbReference type="CCDS" id="CCDS86362.1">
    <molecule id="Q14155-6"/>
</dbReference>
<dbReference type="CCDS" id="CCDS9521.1">
    <molecule id="Q14155-1"/>
</dbReference>
<dbReference type="RefSeq" id="NP_001106983.1">
    <molecule id="Q14155-4"/>
    <property type="nucleotide sequence ID" value="NM_001113511.2"/>
</dbReference>
<dbReference type="RefSeq" id="NP_001106984.1">
    <molecule id="Q14155-2"/>
    <property type="nucleotide sequence ID" value="NM_001113512.2"/>
</dbReference>
<dbReference type="RefSeq" id="NP_001106985.1">
    <molecule id="Q14155-1"/>
    <property type="nucleotide sequence ID" value="NM_001113513.2"/>
</dbReference>
<dbReference type="RefSeq" id="NP_001307780.1">
    <molecule id="Q14155-1"/>
    <property type="nucleotide sequence ID" value="NM_001320851.2"/>
</dbReference>
<dbReference type="RefSeq" id="NP_001307782.1">
    <property type="nucleotide sequence ID" value="NM_001320853.1"/>
</dbReference>
<dbReference type="RefSeq" id="NP_001307783.1">
    <property type="nucleotide sequence ID" value="NM_001320854.1"/>
</dbReference>
<dbReference type="RefSeq" id="NP_001317526.1">
    <molecule id="Q14155-6"/>
    <property type="nucleotide sequence ID" value="NM_001330597.2"/>
</dbReference>
<dbReference type="RefSeq" id="NP_001317527.1">
    <molecule id="Q14155-6"/>
    <property type="nucleotide sequence ID" value="NM_001330598.2"/>
</dbReference>
<dbReference type="RefSeq" id="NP_001340981.1">
    <molecule id="Q14155-1"/>
    <property type="nucleotide sequence ID" value="NM_001354052.2"/>
</dbReference>
<dbReference type="RefSeq" id="NP_001340982.1">
    <molecule id="Q14155-1"/>
    <property type="nucleotide sequence ID" value="NM_001354053.2"/>
</dbReference>
<dbReference type="RefSeq" id="NP_001340985.1">
    <molecule id="Q14155-6"/>
    <property type="nucleotide sequence ID" value="NM_001354056.1"/>
</dbReference>
<dbReference type="RefSeq" id="NP_001340986.1">
    <molecule id="Q14155-6"/>
    <property type="nucleotide sequence ID" value="NM_001354057.2"/>
</dbReference>
<dbReference type="RefSeq" id="NP_001340987.1">
    <molecule id="Q14155-6"/>
    <property type="nucleotide sequence ID" value="NM_001354058.2"/>
</dbReference>
<dbReference type="RefSeq" id="NP_001340988.1">
    <molecule id="Q14155-6"/>
    <property type="nucleotide sequence ID" value="NM_001354059.2"/>
</dbReference>
<dbReference type="RefSeq" id="NP_001340989.1">
    <molecule id="Q14155-6"/>
    <property type="nucleotide sequence ID" value="NM_001354060.2"/>
</dbReference>
<dbReference type="RefSeq" id="NP_003890.1">
    <molecule id="Q14155-1"/>
    <property type="nucleotide sequence ID" value="NM_003899.5"/>
</dbReference>
<dbReference type="RefSeq" id="NP_663788.1">
    <molecule id="Q14155-3"/>
    <property type="nucleotide sequence ID" value="NM_145735.3"/>
</dbReference>
<dbReference type="RefSeq" id="XP_016876313.1">
    <property type="nucleotide sequence ID" value="XM_017020824.1"/>
</dbReference>
<dbReference type="RefSeq" id="XP_016876314.1">
    <property type="nucleotide sequence ID" value="XM_017020825.1"/>
</dbReference>
<dbReference type="RefSeq" id="XP_047286688.1">
    <molecule id="Q14155-5"/>
    <property type="nucleotide sequence ID" value="XM_047430732.1"/>
</dbReference>
<dbReference type="RefSeq" id="XP_047286699.1">
    <molecule id="Q14155-1"/>
    <property type="nucleotide sequence ID" value="XM_047430743.1"/>
</dbReference>
<dbReference type="RefSeq" id="XP_047286700.1">
    <molecule id="Q14155-1"/>
    <property type="nucleotide sequence ID" value="XM_047430744.1"/>
</dbReference>
<dbReference type="RefSeq" id="XP_047286701.1">
    <molecule id="Q14155-1"/>
    <property type="nucleotide sequence ID" value="XM_047430745.1"/>
</dbReference>
<dbReference type="RefSeq" id="XP_054231097.1">
    <molecule id="Q14155-5"/>
    <property type="nucleotide sequence ID" value="XM_054375122.1"/>
</dbReference>
<dbReference type="RefSeq" id="XP_054231109.1">
    <molecule id="Q14155-1"/>
    <property type="nucleotide sequence ID" value="XM_054375134.1"/>
</dbReference>
<dbReference type="RefSeq" id="XP_054231110.1">
    <molecule id="Q14155-1"/>
    <property type="nucleotide sequence ID" value="XM_054375135.1"/>
</dbReference>
<dbReference type="RefSeq" id="XP_054231111.1">
    <molecule id="Q14155-1"/>
    <property type="nucleotide sequence ID" value="XM_054375136.1"/>
</dbReference>
<dbReference type="PDB" id="1BY1">
    <property type="method" value="NMR"/>
    <property type="chains" value="A=260-467"/>
</dbReference>
<dbReference type="PDB" id="1ZSG">
    <property type="method" value="NMR"/>
    <property type="chains" value="A=179-243"/>
</dbReference>
<dbReference type="PDB" id="2L3G">
    <property type="method" value="NMR"/>
    <property type="chains" value="A=1-137"/>
</dbReference>
<dbReference type="PDB" id="5SXP">
    <property type="method" value="X-ray"/>
    <property type="resolution" value="1.65 A"/>
    <property type="chains" value="A/B/C/D=183-243"/>
</dbReference>
<dbReference type="PDBsum" id="1BY1"/>
<dbReference type="PDBsum" id="1ZSG"/>
<dbReference type="PDBsum" id="2L3G"/>
<dbReference type="PDBsum" id="5SXP"/>
<dbReference type="SMR" id="Q14155"/>
<dbReference type="BioGRID" id="114393">
    <property type="interactions" value="133"/>
</dbReference>
<dbReference type="CORUM" id="Q14155"/>
<dbReference type="DIP" id="DIP-40794N"/>
<dbReference type="FunCoup" id="Q14155">
    <property type="interactions" value="1668"/>
</dbReference>
<dbReference type="IntAct" id="Q14155">
    <property type="interactions" value="77"/>
</dbReference>
<dbReference type="MINT" id="Q14155"/>
<dbReference type="STRING" id="9606.ENSP00000495631"/>
<dbReference type="GlyCosmos" id="Q14155">
    <property type="glycosylation" value="1 site, 1 glycan"/>
</dbReference>
<dbReference type="GlyGen" id="Q14155">
    <property type="glycosylation" value="4 sites, 1 N-linked glycan (1 site), 1 O-linked glycan (2 sites)"/>
</dbReference>
<dbReference type="iPTMnet" id="Q14155"/>
<dbReference type="MetOSite" id="Q14155"/>
<dbReference type="PhosphoSitePlus" id="Q14155"/>
<dbReference type="BioMuta" id="ARHGEF7"/>
<dbReference type="DMDM" id="50403776"/>
<dbReference type="jPOST" id="Q14155"/>
<dbReference type="MassIVE" id="Q14155"/>
<dbReference type="PaxDb" id="9606-ENSP00000364893"/>
<dbReference type="PeptideAtlas" id="Q14155"/>
<dbReference type="ProteomicsDB" id="59858">
    <molecule id="Q14155-4"/>
</dbReference>
<dbReference type="ProteomicsDB" id="59859">
    <molecule id="Q14155-1"/>
</dbReference>
<dbReference type="ProteomicsDB" id="59860">
    <molecule id="Q14155-2"/>
</dbReference>
<dbReference type="ProteomicsDB" id="59861">
    <molecule id="Q14155-3"/>
</dbReference>
<dbReference type="ProteomicsDB" id="59862">
    <molecule id="Q14155-5"/>
</dbReference>
<dbReference type="ProteomicsDB" id="59863">
    <molecule id="Q14155-6"/>
</dbReference>
<dbReference type="Pumba" id="Q14155"/>
<dbReference type="Antibodypedia" id="1486">
    <property type="antibodies" value="298 antibodies from 33 providers"/>
</dbReference>
<dbReference type="DNASU" id="8874"/>
<dbReference type="Ensembl" id="ENST00000317133.9">
    <molecule id="Q14155-3"/>
    <property type="protein sequence ID" value="ENSP00000325994.5"/>
    <property type="gene ID" value="ENSG00000102606.20"/>
</dbReference>
<dbReference type="Ensembl" id="ENST00000375723.5">
    <molecule id="Q14155-6"/>
    <property type="protein sequence ID" value="ENSP00000364875.1"/>
    <property type="gene ID" value="ENSG00000102606.20"/>
</dbReference>
<dbReference type="Ensembl" id="ENST00000375736.8">
    <molecule id="Q14155-1"/>
    <property type="protein sequence ID" value="ENSP00000364888.4"/>
    <property type="gene ID" value="ENSG00000102606.20"/>
</dbReference>
<dbReference type="Ensembl" id="ENST00000375739.6">
    <molecule id="Q14155-2"/>
    <property type="protein sequence ID" value="ENSP00000364891.2"/>
    <property type="gene ID" value="ENSG00000102606.20"/>
</dbReference>
<dbReference type="Ensembl" id="ENST00000375741.6">
    <molecule id="Q14155-4"/>
    <property type="protein sequence ID" value="ENSP00000364893.2"/>
    <property type="gene ID" value="ENSG00000102606.20"/>
</dbReference>
<dbReference type="Ensembl" id="ENST00000426073.6">
    <molecule id="Q14155-1"/>
    <property type="protein sequence ID" value="ENSP00000397068.2"/>
    <property type="gene ID" value="ENSG00000102606.20"/>
</dbReference>
<dbReference type="GeneID" id="8874"/>
<dbReference type="KEGG" id="hsa:8874"/>
<dbReference type="UCSC" id="uc001vrr.3">
    <molecule id="Q14155-4"/>
    <property type="organism name" value="human"/>
</dbReference>
<dbReference type="AGR" id="HGNC:15607"/>
<dbReference type="CTD" id="8874"/>
<dbReference type="DisGeNET" id="8874"/>
<dbReference type="GeneCards" id="ARHGEF7"/>
<dbReference type="HGNC" id="HGNC:15607">
    <property type="gene designation" value="ARHGEF7"/>
</dbReference>
<dbReference type="HPA" id="ENSG00000102606">
    <property type="expression patterns" value="Low tissue specificity"/>
</dbReference>
<dbReference type="MIM" id="605477">
    <property type="type" value="gene"/>
</dbReference>
<dbReference type="neXtProt" id="NX_Q14155"/>
<dbReference type="OpenTargets" id="ENSG00000102606"/>
<dbReference type="PharmGKB" id="PA24977"/>
<dbReference type="VEuPathDB" id="HostDB:ENSG00000102606"/>
<dbReference type="eggNOG" id="KOG2070">
    <property type="taxonomic scope" value="Eukaryota"/>
</dbReference>
<dbReference type="GeneTree" id="ENSGT00940000155360"/>
<dbReference type="InParanoid" id="Q14155"/>
<dbReference type="OrthoDB" id="6019202at2759"/>
<dbReference type="PAN-GO" id="Q14155">
    <property type="GO annotations" value="4 GO annotations based on evolutionary models"/>
</dbReference>
<dbReference type="PhylomeDB" id="Q14155"/>
<dbReference type="TreeFam" id="TF316105"/>
<dbReference type="PathwayCommons" id="Q14155"/>
<dbReference type="Reactome" id="R-HSA-182971">
    <property type="pathway name" value="EGFR downregulation"/>
</dbReference>
<dbReference type="Reactome" id="R-HSA-193648">
    <property type="pathway name" value="NRAGE signals death through JNK"/>
</dbReference>
<dbReference type="Reactome" id="R-HSA-3928664">
    <property type="pathway name" value="Ephrin signaling"/>
</dbReference>
<dbReference type="Reactome" id="R-HSA-416482">
    <property type="pathway name" value="G alpha (12/13) signalling events"/>
</dbReference>
<dbReference type="Reactome" id="R-HSA-8980692">
    <property type="pathway name" value="RHOA GTPase cycle"/>
</dbReference>
<dbReference type="Reactome" id="R-HSA-9013148">
    <property type="pathway name" value="CDC42 GTPase cycle"/>
</dbReference>
<dbReference type="Reactome" id="R-HSA-9013149">
    <property type="pathway name" value="RAC1 GTPase cycle"/>
</dbReference>
<dbReference type="Reactome" id="R-HSA-9013406">
    <property type="pathway name" value="RHOQ GTPase cycle"/>
</dbReference>
<dbReference type="Reactome" id="R-HSA-9013409">
    <property type="pathway name" value="RHOJ GTPase cycle"/>
</dbReference>
<dbReference type="Reactome" id="R-HSA-9013420">
    <property type="pathway name" value="RHOU GTPase cycle"/>
</dbReference>
<dbReference type="Reactome" id="R-HSA-9013424">
    <property type="pathway name" value="RHOV GTPase cycle"/>
</dbReference>
<dbReference type="Reactome" id="R-HSA-9619229">
    <molecule id="Q14155-1"/>
    <property type="pathway name" value="Activation of RAC1 downstream of NMDARs"/>
</dbReference>
<dbReference type="SignaLink" id="Q14155"/>
<dbReference type="SIGNOR" id="Q14155"/>
<dbReference type="BioGRID-ORCS" id="8874">
    <property type="hits" value="230 hits in 1151 CRISPR screens"/>
</dbReference>
<dbReference type="CD-CODE" id="FB4E32DD">
    <property type="entry name" value="Presynaptic clusters and postsynaptic densities"/>
</dbReference>
<dbReference type="ChiTaRS" id="ARHGEF7">
    <property type="organism name" value="human"/>
</dbReference>
<dbReference type="EvolutionaryTrace" id="Q14155"/>
<dbReference type="GeneWiki" id="ARHGEF7"/>
<dbReference type="GenomeRNAi" id="8874"/>
<dbReference type="Pharos" id="Q14155">
    <property type="development level" value="Tbio"/>
</dbReference>
<dbReference type="PRO" id="PR:Q14155"/>
<dbReference type="Proteomes" id="UP000005640">
    <property type="component" value="Chromosome 13"/>
</dbReference>
<dbReference type="RNAct" id="Q14155">
    <property type="molecule type" value="protein"/>
</dbReference>
<dbReference type="Bgee" id="ENSG00000102606">
    <property type="expression patterns" value="Expressed in middle temporal gyrus and 194 other cell types or tissues"/>
</dbReference>
<dbReference type="ExpressionAtlas" id="Q14155">
    <property type="expression patterns" value="baseline and differential"/>
</dbReference>
<dbReference type="GO" id="GO:0005938">
    <property type="term" value="C:cell cortex"/>
    <property type="evidence" value="ECO:0007669"/>
    <property type="project" value="UniProtKB-SubCell"/>
</dbReference>
<dbReference type="GO" id="GO:0005813">
    <property type="term" value="C:centrosome"/>
    <property type="evidence" value="ECO:0000314"/>
    <property type="project" value="UniProtKB"/>
</dbReference>
<dbReference type="GO" id="GO:0005737">
    <property type="term" value="C:cytoplasm"/>
    <property type="evidence" value="ECO:0000318"/>
    <property type="project" value="GO_Central"/>
</dbReference>
<dbReference type="GO" id="GO:0005829">
    <property type="term" value="C:cytosol"/>
    <property type="evidence" value="ECO:0000304"/>
    <property type="project" value="Reactome"/>
</dbReference>
<dbReference type="GO" id="GO:0005925">
    <property type="term" value="C:focal adhesion"/>
    <property type="evidence" value="ECO:0007005"/>
    <property type="project" value="UniProtKB"/>
</dbReference>
<dbReference type="GO" id="GO:0030027">
    <property type="term" value="C:lamellipodium"/>
    <property type="evidence" value="ECO:0000250"/>
    <property type="project" value="UniProtKB"/>
</dbReference>
<dbReference type="GO" id="GO:0097431">
    <property type="term" value="C:mitotic spindle pole"/>
    <property type="evidence" value="ECO:0000314"/>
    <property type="project" value="UniProtKB"/>
</dbReference>
<dbReference type="GO" id="GO:0043005">
    <property type="term" value="C:neuron projection"/>
    <property type="evidence" value="ECO:0000314"/>
    <property type="project" value="BHF-UCL"/>
</dbReference>
<dbReference type="GO" id="GO:0043025">
    <property type="term" value="C:neuronal cell body"/>
    <property type="evidence" value="ECO:0000314"/>
    <property type="project" value="BHF-UCL"/>
</dbReference>
<dbReference type="GO" id="GO:0098794">
    <property type="term" value="C:postsynapse"/>
    <property type="evidence" value="ECO:0000250"/>
    <property type="project" value="UniProtKB"/>
</dbReference>
<dbReference type="GO" id="GO:0032991">
    <property type="term" value="C:protein-containing complex"/>
    <property type="evidence" value="ECO:0000314"/>
    <property type="project" value="UniProtKB"/>
</dbReference>
<dbReference type="GO" id="GO:0001726">
    <property type="term" value="C:ruffle"/>
    <property type="evidence" value="ECO:0007669"/>
    <property type="project" value="UniProtKB-SubCell"/>
</dbReference>
<dbReference type="GO" id="GO:0043015">
    <property type="term" value="F:gamma-tubulin binding"/>
    <property type="evidence" value="ECO:0000314"/>
    <property type="project" value="UniProtKB"/>
</dbReference>
<dbReference type="GO" id="GO:0005085">
    <property type="term" value="F:guanyl-nucleotide exchange factor activity"/>
    <property type="evidence" value="ECO:0000314"/>
    <property type="project" value="BHF-UCL"/>
</dbReference>
<dbReference type="GO" id="GO:0019901">
    <property type="term" value="F:protein kinase binding"/>
    <property type="evidence" value="ECO:0000353"/>
    <property type="project" value="BHF-UCL"/>
</dbReference>
<dbReference type="GO" id="GO:0048013">
    <property type="term" value="P:ephrin receptor signaling pathway"/>
    <property type="evidence" value="ECO:0000304"/>
    <property type="project" value="Reactome"/>
</dbReference>
<dbReference type="GO" id="GO:0048041">
    <property type="term" value="P:focal adhesion assembly"/>
    <property type="evidence" value="ECO:0007005"/>
    <property type="project" value="UniProtKB"/>
</dbReference>
<dbReference type="GO" id="GO:0007030">
    <property type="term" value="P:Golgi organization"/>
    <property type="evidence" value="ECO:0000315"/>
    <property type="project" value="ParkinsonsUK-UCL"/>
</dbReference>
<dbReference type="GO" id="GO:0030032">
    <property type="term" value="P:lamellipodium assembly"/>
    <property type="evidence" value="ECO:0000250"/>
    <property type="project" value="UniProtKB"/>
</dbReference>
<dbReference type="GO" id="GO:1905833">
    <property type="term" value="P:negative regulation of microtubule nucleation"/>
    <property type="evidence" value="ECO:0000315"/>
    <property type="project" value="UniProtKB"/>
</dbReference>
<dbReference type="GO" id="GO:0007399">
    <property type="term" value="P:nervous system development"/>
    <property type="evidence" value="ECO:0007669"/>
    <property type="project" value="UniProtKB-KW"/>
</dbReference>
<dbReference type="GO" id="GO:0043065">
    <property type="term" value="P:positive regulation of apoptotic process"/>
    <property type="evidence" value="ECO:0000315"/>
    <property type="project" value="UniProtKB"/>
</dbReference>
<dbReference type="GO" id="GO:0010763">
    <property type="term" value="P:positive regulation of fibroblast migration"/>
    <property type="evidence" value="ECO:0007005"/>
    <property type="project" value="UniProtKB"/>
</dbReference>
<dbReference type="GO" id="GO:0043547">
    <property type="term" value="P:positive regulation of GTPase activity"/>
    <property type="evidence" value="ECO:0007001"/>
    <property type="project" value="UniProtKB"/>
</dbReference>
<dbReference type="GO" id="GO:2000394">
    <property type="term" value="P:positive regulation of lamellipodium morphogenesis"/>
    <property type="evidence" value="ECO:0007001"/>
    <property type="project" value="UniProtKB"/>
</dbReference>
<dbReference type="GO" id="GO:1900026">
    <property type="term" value="P:positive regulation of substrate adhesion-dependent cell spreading"/>
    <property type="evidence" value="ECO:0007001"/>
    <property type="project" value="UniProtKB"/>
</dbReference>
<dbReference type="GO" id="GO:0007266">
    <property type="term" value="P:Rho protein signal transduction"/>
    <property type="evidence" value="ECO:0000315"/>
    <property type="project" value="ParkinsonsUK-UCL"/>
</dbReference>
<dbReference type="GO" id="GO:0007165">
    <property type="term" value="P:signal transduction"/>
    <property type="evidence" value="ECO:0000304"/>
    <property type="project" value="ProtInc"/>
</dbReference>
<dbReference type="CDD" id="cd21266">
    <property type="entry name" value="CH_betaPIX"/>
    <property type="match status" value="1"/>
</dbReference>
<dbReference type="CDD" id="cd01225">
    <property type="entry name" value="PH_Cool_Pix"/>
    <property type="match status" value="1"/>
</dbReference>
<dbReference type="CDD" id="cd00160">
    <property type="entry name" value="RhoGEF"/>
    <property type="match status" value="1"/>
</dbReference>
<dbReference type="CDD" id="cd12061">
    <property type="entry name" value="SH3_betaPIX"/>
    <property type="match status" value="1"/>
</dbReference>
<dbReference type="FunFam" id="2.30.30.40:FF:000034">
    <property type="entry name" value="Rho guanine nucleotide exchange factor (GEF) 7"/>
    <property type="match status" value="1"/>
</dbReference>
<dbReference type="FunFam" id="1.20.900.10:FF:000016">
    <property type="entry name" value="Rho guanine nucleotide exchange factor 6"/>
    <property type="match status" value="1"/>
</dbReference>
<dbReference type="FunFam" id="2.30.29.30:FF:000094">
    <property type="entry name" value="Rho guanine nucleotide exchange factor 7"/>
    <property type="match status" value="1"/>
</dbReference>
<dbReference type="FunFam" id="1.10.418.10:FF:000049">
    <property type="entry name" value="Rho guanine nucleotide exchange factor 7 isoform X1"/>
    <property type="match status" value="1"/>
</dbReference>
<dbReference type="Gene3D" id="1.10.418.10">
    <property type="entry name" value="Calponin-like domain"/>
    <property type="match status" value="1"/>
</dbReference>
<dbReference type="Gene3D" id="1.20.900.10">
    <property type="entry name" value="Dbl homology (DH) domain"/>
    <property type="match status" value="1"/>
</dbReference>
<dbReference type="Gene3D" id="2.30.29.30">
    <property type="entry name" value="Pleckstrin-homology domain (PH domain)/Phosphotyrosine-binding domain (PTB)"/>
    <property type="match status" value="1"/>
</dbReference>
<dbReference type="Gene3D" id="2.30.30.40">
    <property type="entry name" value="SH3 Domains"/>
    <property type="match status" value="1"/>
</dbReference>
<dbReference type="IDEAL" id="IID00279"/>
<dbReference type="InterPro" id="IPR035789">
    <property type="entry name" value="BetaPIX_SH3"/>
</dbReference>
<dbReference type="InterPro" id="IPR001715">
    <property type="entry name" value="CH_dom"/>
</dbReference>
<dbReference type="InterPro" id="IPR036872">
    <property type="entry name" value="CH_dom_sf"/>
</dbReference>
<dbReference type="InterPro" id="IPR035899">
    <property type="entry name" value="DBL_dom_sf"/>
</dbReference>
<dbReference type="InterPro" id="IPR000219">
    <property type="entry name" value="DH_dom"/>
</dbReference>
<dbReference type="InterPro" id="IPR001331">
    <property type="entry name" value="GDS_CDC24_CS"/>
</dbReference>
<dbReference type="InterPro" id="IPR011993">
    <property type="entry name" value="PH-like_dom_sf"/>
</dbReference>
<dbReference type="InterPro" id="IPR046376">
    <property type="entry name" value="PH_Cool_Pix"/>
</dbReference>
<dbReference type="InterPro" id="IPR001849">
    <property type="entry name" value="PH_domain"/>
</dbReference>
<dbReference type="InterPro" id="IPR036028">
    <property type="entry name" value="SH3-like_dom_sf"/>
</dbReference>
<dbReference type="InterPro" id="IPR001452">
    <property type="entry name" value="SH3_domain"/>
</dbReference>
<dbReference type="PANTHER" id="PTHR46026:SF3">
    <property type="entry name" value="RHO GUANINE NUCLEOTIDE EXCHANGE FACTOR 7"/>
    <property type="match status" value="1"/>
</dbReference>
<dbReference type="PANTHER" id="PTHR46026">
    <property type="entry name" value="RHO-TYPE GUANINE NUCLEOTIDE EXCHANGE FACTOR, ISOFORM F"/>
    <property type="match status" value="1"/>
</dbReference>
<dbReference type="Pfam" id="PF00307">
    <property type="entry name" value="CH"/>
    <property type="match status" value="1"/>
</dbReference>
<dbReference type="Pfam" id="PF00169">
    <property type="entry name" value="PH"/>
    <property type="match status" value="1"/>
</dbReference>
<dbReference type="Pfam" id="PF00621">
    <property type="entry name" value="RhoGEF"/>
    <property type="match status" value="1"/>
</dbReference>
<dbReference type="Pfam" id="PF16615">
    <property type="entry name" value="RhoGEF67_u1"/>
    <property type="match status" value="1"/>
</dbReference>
<dbReference type="Pfam" id="PF16614">
    <property type="entry name" value="RhoGEF67_u2"/>
    <property type="match status" value="1"/>
</dbReference>
<dbReference type="Pfam" id="PF07653">
    <property type="entry name" value="SH3_2"/>
    <property type="match status" value="1"/>
</dbReference>
<dbReference type="PRINTS" id="PR00452">
    <property type="entry name" value="SH3DOMAIN"/>
</dbReference>
<dbReference type="SMART" id="SM00033">
    <property type="entry name" value="CH"/>
    <property type="match status" value="1"/>
</dbReference>
<dbReference type="SMART" id="SM00233">
    <property type="entry name" value="PH"/>
    <property type="match status" value="1"/>
</dbReference>
<dbReference type="SMART" id="SM00325">
    <property type="entry name" value="RhoGEF"/>
    <property type="match status" value="1"/>
</dbReference>
<dbReference type="SMART" id="SM00326">
    <property type="entry name" value="SH3"/>
    <property type="match status" value="1"/>
</dbReference>
<dbReference type="SUPFAM" id="SSF47576">
    <property type="entry name" value="Calponin-homology domain, CH-domain"/>
    <property type="match status" value="1"/>
</dbReference>
<dbReference type="SUPFAM" id="SSF48065">
    <property type="entry name" value="DBL homology domain (DH-domain)"/>
    <property type="match status" value="1"/>
</dbReference>
<dbReference type="SUPFAM" id="SSF50729">
    <property type="entry name" value="PH domain-like"/>
    <property type="match status" value="1"/>
</dbReference>
<dbReference type="SUPFAM" id="SSF50044">
    <property type="entry name" value="SH3-domain"/>
    <property type="match status" value="1"/>
</dbReference>
<dbReference type="PROSITE" id="PS50021">
    <property type="entry name" value="CH"/>
    <property type="match status" value="1"/>
</dbReference>
<dbReference type="PROSITE" id="PS00741">
    <property type="entry name" value="DH_1"/>
    <property type="match status" value="1"/>
</dbReference>
<dbReference type="PROSITE" id="PS50010">
    <property type="entry name" value="DH_2"/>
    <property type="match status" value="1"/>
</dbReference>
<dbReference type="PROSITE" id="PS50003">
    <property type="entry name" value="PH_DOMAIN"/>
    <property type="match status" value="1"/>
</dbReference>
<dbReference type="PROSITE" id="PS50002">
    <property type="entry name" value="SH3"/>
    <property type="match status" value="1"/>
</dbReference>
<accession>Q14155</accession>
<accession>B1ALK6</accession>
<accession>B1ALK8</accession>
<accession>Q3LIA4</accession>
<accession>Q5W9H0</accession>
<accession>Q6P9G3</accession>
<accession>Q6PII2</accession>
<accession>Q86W63</accession>
<accession>Q8N3M1</accession>
<organism>
    <name type="scientific">Homo sapiens</name>
    <name type="common">Human</name>
    <dbReference type="NCBI Taxonomy" id="9606"/>
    <lineage>
        <taxon>Eukaryota</taxon>
        <taxon>Metazoa</taxon>
        <taxon>Chordata</taxon>
        <taxon>Craniata</taxon>
        <taxon>Vertebrata</taxon>
        <taxon>Euteleostomi</taxon>
        <taxon>Mammalia</taxon>
        <taxon>Eutheria</taxon>
        <taxon>Euarchontoglires</taxon>
        <taxon>Primates</taxon>
        <taxon>Haplorrhini</taxon>
        <taxon>Catarrhini</taxon>
        <taxon>Hominidae</taxon>
        <taxon>Homo</taxon>
    </lineage>
</organism>
<keyword id="KW-0002">3D-structure</keyword>
<keyword id="KW-0007">Acetylation</keyword>
<keyword id="KW-0025">Alternative splicing</keyword>
<keyword id="KW-0965">Cell junction</keyword>
<keyword id="KW-0966">Cell projection</keyword>
<keyword id="KW-0963">Cytoplasm</keyword>
<keyword id="KW-0344">Guanine-nucleotide releasing factor</keyword>
<keyword id="KW-0524">Neurogenesis</keyword>
<keyword id="KW-0597">Phosphoprotein</keyword>
<keyword id="KW-1267">Proteomics identification</keyword>
<keyword id="KW-1185">Reference proteome</keyword>
<keyword id="KW-0728">SH3 domain</keyword>
<reference key="1">
    <citation type="journal article" date="1995" name="DNA Res.">
        <title>Prediction of the coding sequences of unidentified human genes. IV. The coding sequences of 40 new genes (KIAA0121-KIAA0160) deduced by analysis of cDNA clones from human cell line KG-1.</title>
        <authorList>
            <person name="Nagase T."/>
            <person name="Seki N."/>
            <person name="Tanaka A."/>
            <person name="Ishikawa K."/>
            <person name="Nomura N."/>
        </authorList>
    </citation>
    <scope>NUCLEOTIDE SEQUENCE [LARGE SCALE MRNA] (ISOFORM 1)</scope>
    <source>
        <tissue>Bone marrow</tissue>
    </source>
</reference>
<reference key="2">
    <citation type="journal article" date="1998" name="J. Biol. Chem.">
        <title>A novel regulator of p21-activated kinases.</title>
        <authorList>
            <person name="Bagrodia S."/>
            <person name="Taylor S.J."/>
            <person name="Jordon K.A."/>
            <person name="Van Aelst L."/>
            <person name="Cerione R.A."/>
        </authorList>
    </citation>
    <scope>NUCLEOTIDE SEQUENCE [MRNA] (ISOFORM 1)</scope>
</reference>
<reference key="3">
    <citation type="journal article" date="2007" name="BMC Genomics">
        <title>The full-ORF clone resource of the German cDNA consortium.</title>
        <authorList>
            <person name="Bechtel S."/>
            <person name="Rosenfelder H."/>
            <person name="Duda A."/>
            <person name="Schmidt C.P."/>
            <person name="Ernst U."/>
            <person name="Wellenreuther R."/>
            <person name="Mehrle A."/>
            <person name="Schuster C."/>
            <person name="Bahr A."/>
            <person name="Bloecker H."/>
            <person name="Heubner D."/>
            <person name="Hoerlein A."/>
            <person name="Michel G."/>
            <person name="Wedler H."/>
            <person name="Koehrer K."/>
            <person name="Ottenwaelder B."/>
            <person name="Poustka A."/>
            <person name="Wiemann S."/>
            <person name="Schupp I."/>
        </authorList>
    </citation>
    <scope>NUCLEOTIDE SEQUENCE [LARGE SCALE MRNA] (ISOFORM 3)</scope>
    <source>
        <tissue>Amygdala</tissue>
    </source>
</reference>
<reference key="4">
    <citation type="journal article" date="2004" name="Nature">
        <title>The DNA sequence and analysis of human chromosome 13.</title>
        <authorList>
            <person name="Dunham A."/>
            <person name="Matthews L.H."/>
            <person name="Burton J."/>
            <person name="Ashurst J.L."/>
            <person name="Howe K.L."/>
            <person name="Ashcroft K.J."/>
            <person name="Beare D.M."/>
            <person name="Burford D.C."/>
            <person name="Hunt S.E."/>
            <person name="Griffiths-Jones S."/>
            <person name="Jones M.C."/>
            <person name="Keenan S.J."/>
            <person name="Oliver K."/>
            <person name="Scott C.E."/>
            <person name="Ainscough R."/>
            <person name="Almeida J.P."/>
            <person name="Ambrose K.D."/>
            <person name="Andrews D.T."/>
            <person name="Ashwell R.I.S."/>
            <person name="Babbage A.K."/>
            <person name="Bagguley C.L."/>
            <person name="Bailey J."/>
            <person name="Bannerjee R."/>
            <person name="Barlow K.F."/>
            <person name="Bates K."/>
            <person name="Beasley H."/>
            <person name="Bird C.P."/>
            <person name="Bray-Allen S."/>
            <person name="Brown A.J."/>
            <person name="Brown J.Y."/>
            <person name="Burrill W."/>
            <person name="Carder C."/>
            <person name="Carter N.P."/>
            <person name="Chapman J.C."/>
            <person name="Clamp M.E."/>
            <person name="Clark S.Y."/>
            <person name="Clarke G."/>
            <person name="Clee C.M."/>
            <person name="Clegg S.C."/>
            <person name="Cobley V."/>
            <person name="Collins J.E."/>
            <person name="Corby N."/>
            <person name="Coville G.J."/>
            <person name="Deloukas P."/>
            <person name="Dhami P."/>
            <person name="Dunham I."/>
            <person name="Dunn M."/>
            <person name="Earthrowl M.E."/>
            <person name="Ellington A.G."/>
            <person name="Faulkner L."/>
            <person name="Frankish A.G."/>
            <person name="Frankland J."/>
            <person name="French L."/>
            <person name="Garner P."/>
            <person name="Garnett J."/>
            <person name="Gilbert J.G.R."/>
            <person name="Gilson C.J."/>
            <person name="Ghori J."/>
            <person name="Grafham D.V."/>
            <person name="Gribble S.M."/>
            <person name="Griffiths C."/>
            <person name="Hall R.E."/>
            <person name="Hammond S."/>
            <person name="Harley J.L."/>
            <person name="Hart E.A."/>
            <person name="Heath P.D."/>
            <person name="Howden P.J."/>
            <person name="Huckle E.J."/>
            <person name="Hunt P.J."/>
            <person name="Hunt A.R."/>
            <person name="Johnson C."/>
            <person name="Johnson D."/>
            <person name="Kay M."/>
            <person name="Kimberley A.M."/>
            <person name="King A."/>
            <person name="Laird G.K."/>
            <person name="Langford C.J."/>
            <person name="Lawlor S."/>
            <person name="Leongamornlert D.A."/>
            <person name="Lloyd D.M."/>
            <person name="Lloyd C."/>
            <person name="Loveland J.E."/>
            <person name="Lovell J."/>
            <person name="Martin S."/>
            <person name="Mashreghi-Mohammadi M."/>
            <person name="McLaren S.J."/>
            <person name="McMurray A."/>
            <person name="Milne S."/>
            <person name="Moore M.J.F."/>
            <person name="Nickerson T."/>
            <person name="Palmer S.A."/>
            <person name="Pearce A.V."/>
            <person name="Peck A.I."/>
            <person name="Pelan S."/>
            <person name="Phillimore B."/>
            <person name="Porter K.M."/>
            <person name="Rice C.M."/>
            <person name="Searle S."/>
            <person name="Sehra H.K."/>
            <person name="Shownkeen R."/>
            <person name="Skuce C.D."/>
            <person name="Smith M."/>
            <person name="Steward C.A."/>
            <person name="Sycamore N."/>
            <person name="Tester J."/>
            <person name="Thomas D.W."/>
            <person name="Tracey A."/>
            <person name="Tromans A."/>
            <person name="Tubby B."/>
            <person name="Wall M."/>
            <person name="Wallis J.M."/>
            <person name="West A.P."/>
            <person name="Whitehead S.L."/>
            <person name="Willey D.L."/>
            <person name="Wilming L."/>
            <person name="Wray P.W."/>
            <person name="Wright M.W."/>
            <person name="Young L."/>
            <person name="Coulson A."/>
            <person name="Durbin R.M."/>
            <person name="Hubbard T."/>
            <person name="Sulston J.E."/>
            <person name="Beck S."/>
            <person name="Bentley D.R."/>
            <person name="Rogers J."/>
            <person name="Ross M.T."/>
        </authorList>
    </citation>
    <scope>NUCLEOTIDE SEQUENCE [LARGE SCALE GENOMIC DNA]</scope>
</reference>
<reference key="5">
    <citation type="submission" date="2005-07" db="EMBL/GenBank/DDBJ databases">
        <authorList>
            <person name="Mural R.J."/>
            <person name="Istrail S."/>
            <person name="Sutton G.G."/>
            <person name="Florea L."/>
            <person name="Halpern A.L."/>
            <person name="Mobarry C.M."/>
            <person name="Lippert R."/>
            <person name="Walenz B."/>
            <person name="Shatkay H."/>
            <person name="Dew I."/>
            <person name="Miller J.R."/>
            <person name="Flanigan M.J."/>
            <person name="Edwards N.J."/>
            <person name="Bolanos R."/>
            <person name="Fasulo D."/>
            <person name="Halldorsson B.V."/>
            <person name="Hannenhalli S."/>
            <person name="Turner R."/>
            <person name="Yooseph S."/>
            <person name="Lu F."/>
            <person name="Nusskern D.R."/>
            <person name="Shue B.C."/>
            <person name="Zheng X.H."/>
            <person name="Zhong F."/>
            <person name="Delcher A.L."/>
            <person name="Huson D.H."/>
            <person name="Kravitz S.A."/>
            <person name="Mouchard L."/>
            <person name="Reinert K."/>
            <person name="Remington K.A."/>
            <person name="Clark A.G."/>
            <person name="Waterman M.S."/>
            <person name="Eichler E.E."/>
            <person name="Adams M.D."/>
            <person name="Hunkapiller M.W."/>
            <person name="Myers E.W."/>
            <person name="Venter J.C."/>
        </authorList>
    </citation>
    <scope>NUCLEOTIDE SEQUENCE [LARGE SCALE GENOMIC DNA]</scope>
</reference>
<reference key="6">
    <citation type="journal article" date="2004" name="Genome Res.">
        <title>The status, quality, and expansion of the NIH full-length cDNA project: the Mammalian Gene Collection (MGC).</title>
        <authorList>
            <consortium name="The MGC Project Team"/>
        </authorList>
    </citation>
    <scope>NUCLEOTIDE SEQUENCE [LARGE SCALE MRNA] (ISOFORMS 1; 2 AND 4)</scope>
    <source>
        <tissue>Brain</tissue>
        <tissue>Testis</tissue>
    </source>
</reference>
<reference key="7">
    <citation type="journal article" date="2004" name="J. Mol. Biol.">
        <title>Alternative splice variants encoding unstable protein domains exist in the human brain.</title>
        <authorList>
            <person name="Homma K."/>
            <person name="Kikuno R.F."/>
            <person name="Nagase T."/>
            <person name="Ohara O."/>
            <person name="Nishikawa K."/>
        </authorList>
    </citation>
    <scope>NUCLEOTIDE SEQUENCE [MRNA] OF 52-803 (ISOFORM 5)</scope>
</reference>
<reference key="8">
    <citation type="journal article" date="2003" name="Cancer Lett.">
        <title>Neuroblastoma oligo-capping cDNA project: toward the understanding of the genesis and biology of neuroblastoma.</title>
        <authorList>
            <person name="Ohira M."/>
            <person name="Morohashi A."/>
            <person name="Nakamura Y."/>
            <person name="Isogai E."/>
            <person name="Furuya K."/>
            <person name="Hamano S."/>
            <person name="Machida T."/>
            <person name="Aoyama M."/>
            <person name="Fukumura M."/>
            <person name="Miyazaki K."/>
            <person name="Suzuki Y."/>
            <person name="Sugano S."/>
            <person name="Hirato J."/>
            <person name="Nakagawara A."/>
        </authorList>
    </citation>
    <scope>NUCLEOTIDE SEQUENCE [LARGE SCALE MRNA] OF 433-803</scope>
    <source>
        <tissue>Neuroblastoma</tissue>
    </source>
</reference>
<reference key="9">
    <citation type="journal article" date="2004" name="Curr. Biol.">
        <title>Mammalian Scribble forms a tight complex with the betaPIX exchange factor.</title>
        <authorList>
            <person name="Audebert S."/>
            <person name="Navarro C."/>
            <person name="Nourry C."/>
            <person name="Chasserot-Golaz S."/>
            <person name="Lecine P."/>
            <person name="Bellaiche Y."/>
            <person name="Dupont J.-L."/>
            <person name="Premont R.T."/>
            <person name="Sempere C."/>
            <person name="Strub J.-M."/>
            <person name="Van Dorsselaer A."/>
            <person name="Vitale N."/>
            <person name="Borg J.-P."/>
        </authorList>
    </citation>
    <scope>INTERACTION WITH SCRIB</scope>
</reference>
<reference key="10">
    <citation type="journal article" date="2006" name="Biochem. Biophys. Res. Commun.">
        <title>Molecular interaction of NADPH oxidase 1 with betaPix and Nox Organizer 1.</title>
        <authorList>
            <person name="Park H.S."/>
            <person name="Park D."/>
            <person name="Bae Y.S."/>
        </authorList>
    </citation>
    <scope>INTERACTION WITH NOX1</scope>
</reference>
<reference key="11">
    <citation type="journal article" date="2008" name="Cell">
        <title>Deregulation of scribble promotes mammary tumorigenesis and reveals a role for cell polarity in carcinoma.</title>
        <authorList>
            <person name="Zhan L."/>
            <person name="Rosenberg A."/>
            <person name="Bergami K.C."/>
            <person name="Yu M."/>
            <person name="Xuan Z."/>
            <person name="Jaffe A.B."/>
            <person name="Allred C."/>
            <person name="Muthuswamy S.K."/>
        </authorList>
    </citation>
    <scope>FUNCTION</scope>
    <scope>INTERACTION WITH SCRIB</scope>
</reference>
<reference key="12">
    <citation type="journal article" date="2008" name="Hum. Mol. Genet.">
        <title>Scrib regulates PAK activity during the cell migration process.</title>
        <authorList>
            <person name="Nola S."/>
            <person name="Sebbagh M."/>
            <person name="Marchetto S."/>
            <person name="Osmani N."/>
            <person name="Nourry C."/>
            <person name="Audebert S."/>
            <person name="Navarro C."/>
            <person name="Rachel R."/>
            <person name="Montcouquiol M."/>
            <person name="Sans N."/>
            <person name="Etienne-Manneville S."/>
            <person name="Borg J.-P."/>
            <person name="Santoni M.-J."/>
        </authorList>
    </citation>
    <scope>FUNCTION IN CELL MIGRATION</scope>
</reference>
<reference key="13">
    <citation type="journal article" date="2008" name="J. Neurosci.">
        <title>Preso, a novel PSD-95-interacting FERM and PDZ domain protein that regulates dendritic spine morphogenesis.</title>
        <authorList>
            <person name="Lee H.W."/>
            <person name="Choi J."/>
            <person name="Shin H."/>
            <person name="Kim K."/>
            <person name="Yang J."/>
            <person name="Na M."/>
            <person name="Choi S.Y."/>
            <person name="Kang G.B."/>
            <person name="Eom S.H."/>
            <person name="Kim H."/>
            <person name="Kim E."/>
        </authorList>
    </citation>
    <scope>INTERACTION WITH FRMPD4</scope>
</reference>
<reference key="14">
    <citation type="journal article" date="2008" name="Neuron">
        <title>Activity-dependent synaptogenesis: regulation by a CaM-kinase kinase/CaM-kinase I/betaPIX signaling complex.</title>
        <authorList>
            <person name="Saneyoshi T."/>
            <person name="Wayman G."/>
            <person name="Fortin D."/>
            <person name="Davare M."/>
            <person name="Hoshi N."/>
            <person name="Nozaki N."/>
            <person name="Natsume T."/>
            <person name="Soderling T.R."/>
        </authorList>
    </citation>
    <scope>FUNCTION</scope>
    <scope>PHOSPHORYLATION AT SER-694</scope>
    <scope>INTERACTION WITH CAMK1</scope>
</reference>
<reference key="15">
    <citation type="journal article" date="2008" name="Proc. Natl. Acad. Sci. U.S.A.">
        <title>A quantitative atlas of mitotic phosphorylation.</title>
        <authorList>
            <person name="Dephoure N."/>
            <person name="Zhou C."/>
            <person name="Villen J."/>
            <person name="Beausoleil S.A."/>
            <person name="Bakalarski C.E."/>
            <person name="Elledge S.J."/>
            <person name="Gygi S.P."/>
        </authorList>
    </citation>
    <scope>PHOSPHORYLATION [LARGE SCALE ANALYSIS] AT SER-694</scope>
    <scope>IDENTIFICATION BY MASS SPECTROMETRY [LARGE SCALE ANALYSIS]</scope>
    <source>
        <tissue>Cervix carcinoma</tissue>
    </source>
</reference>
<reference key="16">
    <citation type="journal article" date="2009" name="Sci. Signal.">
        <title>Quantitative phosphoproteomic analysis of T cell receptor signaling reveals system-wide modulation of protein-protein interactions.</title>
        <authorList>
            <person name="Mayya V."/>
            <person name="Lundgren D.H."/>
            <person name="Hwang S.-I."/>
            <person name="Rezaul K."/>
            <person name="Wu L."/>
            <person name="Eng J.K."/>
            <person name="Rodionov V."/>
            <person name="Han D.K."/>
        </authorList>
    </citation>
    <scope>PHOSPHORYLATION [LARGE SCALE ANALYSIS] AT SER-518</scope>
    <scope>IDENTIFICATION BY MASS SPECTROMETRY [LARGE SCALE ANALYSIS]</scope>
    <source>
        <tissue>Leukemic T-cell</tissue>
    </source>
</reference>
<reference key="17">
    <citation type="journal article" date="2011" name="BMC Syst. Biol.">
        <title>Initial characterization of the human central proteome.</title>
        <authorList>
            <person name="Burkard T.R."/>
            <person name="Planyavsky M."/>
            <person name="Kaupe I."/>
            <person name="Breitwieser F.P."/>
            <person name="Buerckstuemmer T."/>
            <person name="Bennett K.L."/>
            <person name="Superti-Furga G."/>
            <person name="Colinge J."/>
        </authorList>
    </citation>
    <scope>IDENTIFICATION BY MASS SPECTROMETRY [LARGE SCALE ANALYSIS]</scope>
</reference>
<reference key="18">
    <citation type="journal article" date="2011" name="J. Biol. Chem.">
        <title>Sorting nexin 27 protein regulates trafficking of a p21-activated kinase (PAK) interacting exchange factor (beta-Pix)-G protein-coupled receptor kinase interacting protein (GIT) complex via a PDZ domain interaction.</title>
        <authorList>
            <person name="Valdes J.L."/>
            <person name="Tang J."/>
            <person name="McDermott M.I."/>
            <person name="Kuo J.C."/>
            <person name="Zimmerman S.P."/>
            <person name="Wincovitch S.M."/>
            <person name="Waterman C.M."/>
            <person name="Milgram S.L."/>
            <person name="Playford M.P."/>
        </authorList>
    </citation>
    <scope>INTERACTION WITH SNX27 (ISOFORM 1)</scope>
</reference>
<reference key="19">
    <citation type="journal article" date="2011" name="Sci. Signal.">
        <title>System-wide temporal characterization of the proteome and phosphoproteome of human embryonic stem cell differentiation.</title>
        <authorList>
            <person name="Rigbolt K.T."/>
            <person name="Prokhorova T.A."/>
            <person name="Akimov V."/>
            <person name="Henningsen J."/>
            <person name="Johansen P.T."/>
            <person name="Kratchmarova I."/>
            <person name="Kassem M."/>
            <person name="Mann M."/>
            <person name="Olsen J.V."/>
            <person name="Blagoev B."/>
        </authorList>
    </citation>
    <scope>PHOSPHORYLATION [LARGE SCALE ANALYSIS] AT SER-249 AND SER-694</scope>
    <scope>PHOSPHORYLATION [LARGE SCALE ANALYSIS] AT SER-560 AND SER-579 (ISOFORM 1)</scope>
    <scope>PHOSPHORYLATION [LARGE SCALE ANALYSIS] AT SER-645 AND SER-664 (ISOFORM 5)</scope>
    <scope>IDENTIFICATION BY MASS SPECTROMETRY [LARGE SCALE ANALYSIS]</scope>
</reference>
<reference key="20">
    <citation type="journal article" date="2012" name="Mol. Cell. Proteomics">
        <title>Comparative large-scale characterisation of plant vs. mammal proteins reveals similar and idiosyncratic N-alpha acetylation features.</title>
        <authorList>
            <person name="Bienvenut W.V."/>
            <person name="Sumpton D."/>
            <person name="Martinez A."/>
            <person name="Lilla S."/>
            <person name="Espagne C."/>
            <person name="Meinnel T."/>
            <person name="Giglione C."/>
        </authorList>
    </citation>
    <scope>ACETYLATION [LARGE SCALE ANALYSIS] AT THR-2 (ISOFORMS 1 AND 6)</scope>
    <scope>CLEAVAGE OF INITIATOR METHIONINE [LARGE SCALE ANALYSIS] (ISOFORM 1)</scope>
    <scope>CLEAVAGE OF INITIATOR METHIONINE [LARGE SCALE ANALYSIS] (ISOFORM 6)</scope>
    <scope>IDENTIFICATION BY MASS SPECTROMETRY [LARGE SCALE ANALYSIS]</scope>
</reference>
<reference key="21">
    <citation type="journal article" date="2012" name="PLoS ONE">
        <title>Bin2 is a membrane sculpting N-BAR protein that influences leucocyte podosomes, motility and phagocytosis.</title>
        <authorList>
            <person name="Sanchez-Barrena M.J."/>
            <person name="Vallis Y."/>
            <person name="Clatworthy M.R."/>
            <person name="Doherty G.J."/>
            <person name="Veprintsev D.B."/>
            <person name="Evans P.R."/>
            <person name="McMahon H.T."/>
        </authorList>
    </citation>
    <scope>INTERACTION WITH BIN2</scope>
</reference>
<reference key="22">
    <citation type="journal article" date="2012" name="Proc. Natl. Acad. Sci. U.S.A.">
        <title>N-terminal acetylome analyses and functional insights of the N-terminal acetyltransferase NatB.</title>
        <authorList>
            <person name="Van Damme P."/>
            <person name="Lasa M."/>
            <person name="Polevoda B."/>
            <person name="Gazquez C."/>
            <person name="Elosegui-Artola A."/>
            <person name="Kim D.S."/>
            <person name="De Juan-Pardo E."/>
            <person name="Demeyer K."/>
            <person name="Hole K."/>
            <person name="Larrea E."/>
            <person name="Timmerman E."/>
            <person name="Prieto J."/>
            <person name="Arnesen T."/>
            <person name="Sherman F."/>
            <person name="Gevaert K."/>
            <person name="Aldabe R."/>
        </authorList>
    </citation>
    <scope>ACETYLATION [LARGE SCALE ANALYSIS] AT MET-1 (ISOFORMS 1 AND 6)</scope>
    <scope>IDENTIFICATION BY MASS SPECTROMETRY [LARGE SCALE ANALYSIS]</scope>
</reference>
<reference key="23">
    <citation type="journal article" date="2013" name="J. Proteome Res.">
        <title>Toward a comprehensive characterization of a human cancer cell phosphoproteome.</title>
        <authorList>
            <person name="Zhou H."/>
            <person name="Di Palma S."/>
            <person name="Preisinger C."/>
            <person name="Peng M."/>
            <person name="Polat A.N."/>
            <person name="Heck A.J."/>
            <person name="Mohammed S."/>
        </authorList>
    </citation>
    <scope>PHOSPHORYLATION [LARGE SCALE ANALYSIS] AT SER-257; SER-518 AND SER-694</scope>
    <scope>IDENTIFICATION BY MASS SPECTROMETRY [LARGE SCALE ANALYSIS]</scope>
    <source>
        <tissue>Cervix carcinoma</tissue>
        <tissue>Erythroleukemia</tissue>
    </source>
</reference>
<reference key="24">
    <citation type="journal article" date="2014" name="J. Proteomics">
        <title>An enzyme assisted RP-RPLC approach for in-depth analysis of human liver phosphoproteome.</title>
        <authorList>
            <person name="Bian Y."/>
            <person name="Song C."/>
            <person name="Cheng K."/>
            <person name="Dong M."/>
            <person name="Wang F."/>
            <person name="Huang J."/>
            <person name="Sun D."/>
            <person name="Wang L."/>
            <person name="Ye M."/>
            <person name="Zou H."/>
        </authorList>
    </citation>
    <scope>PHOSPHORYLATION [LARGE SCALE ANALYSIS] AT SER-560 (ISOFORM 1)</scope>
    <scope>PHOSPHORYLATION [LARGE SCALE ANALYSIS] AT SER-645 (ISOFORM 5)</scope>
    <scope>IDENTIFICATION BY MASS SPECTROMETRY [LARGE SCALE ANALYSIS]</scope>
    <source>
        <tissue>Liver</tissue>
    </source>
</reference>
<reference key="25">
    <citation type="journal article" date="1998" name="Nat. Struct. Biol.">
        <title>Structure and mutagenesis of the Dbl homology domain.</title>
        <authorList>
            <person name="Aghazadeh B."/>
            <person name="Zhu K."/>
            <person name="Kubiseski T.J."/>
            <person name="Liu G.A."/>
            <person name="Pawson T."/>
            <person name="Zheng Y."/>
            <person name="Rosen M.K."/>
        </authorList>
    </citation>
    <scope>STRUCTURE BY NMR OF 260-467</scope>
</reference>
<reference key="26">
    <citation type="journal article" date="2005" name="Biochemistry">
        <title>Structural analysis of the SH3 domain of beta-PIX and its interaction with alpha-p21 activated kinase (PAK).</title>
        <authorList>
            <person name="Mott H.R."/>
            <person name="Nietlispach D."/>
            <person name="Evetts K.A."/>
            <person name="Owen D."/>
        </authorList>
    </citation>
    <scope>STRUCTURE BY NMR OF 179-243 OF COMPLEX WITH UNPHOSPHORYLATED PAK1</scope>
</reference>
<reference key="27">
    <citation type="submission" date="2010-12" db="PDB data bank">
        <title>Northeast structural genomics consortium target HR4495E.</title>
        <authorList>
            <consortium name="Northeast structural genomics consortium (NESG)"/>
        </authorList>
    </citation>
    <scope>STRUCTURE BY NMR OF 1-137</scope>
</reference>
<reference key="28">
    <citation type="journal article" date="2011" name="Nature">
        <title>Exome sequencing identifies frequent mutation of the SWI/SNF complex gene PBRM1 in renal carcinoma.</title>
        <authorList>
            <person name="Varela I."/>
            <person name="Tarpey P."/>
            <person name="Raine K."/>
            <person name="Huang D."/>
            <person name="Ong C.K."/>
            <person name="Stephens P."/>
            <person name="Davies H."/>
            <person name="Jones D."/>
            <person name="Lin M.L."/>
            <person name="Teague J."/>
            <person name="Bignell G."/>
            <person name="Butler A."/>
            <person name="Cho J."/>
            <person name="Dalgliesh G.L."/>
            <person name="Galappaththige D."/>
            <person name="Greenman C."/>
            <person name="Hardy C."/>
            <person name="Jia M."/>
            <person name="Latimer C."/>
            <person name="Lau K.W."/>
            <person name="Marshall J."/>
            <person name="McLaren S."/>
            <person name="Menzies A."/>
            <person name="Mudie L."/>
            <person name="Stebbings L."/>
            <person name="Largaespada D.A."/>
            <person name="Wessels L.F.A."/>
            <person name="Richard S."/>
            <person name="Kahnoski R.J."/>
            <person name="Anema J."/>
            <person name="Tuveson D.A."/>
            <person name="Perez-Mancera P.A."/>
            <person name="Mustonen V."/>
            <person name="Fischer A."/>
            <person name="Adams D.J."/>
            <person name="Rust A."/>
            <person name="Chan-On W."/>
            <person name="Subimerb C."/>
            <person name="Dykema K."/>
            <person name="Furge K."/>
            <person name="Campbell P.J."/>
            <person name="Teh B.T."/>
            <person name="Stratton M.R."/>
            <person name="Futreal P.A."/>
        </authorList>
    </citation>
    <scope>VARIANT ALA-790</scope>
</reference>
<evidence type="ECO:0000250" key="1"/>
<evidence type="ECO:0000250" key="2">
    <source>
        <dbReference type="UniProtKB" id="Q9ES28"/>
    </source>
</evidence>
<evidence type="ECO:0000255" key="3">
    <source>
        <dbReference type="PROSITE-ProRule" id="PRU00044"/>
    </source>
</evidence>
<evidence type="ECO:0000255" key="4">
    <source>
        <dbReference type="PROSITE-ProRule" id="PRU00062"/>
    </source>
</evidence>
<evidence type="ECO:0000255" key="5">
    <source>
        <dbReference type="PROSITE-ProRule" id="PRU00145"/>
    </source>
</evidence>
<evidence type="ECO:0000255" key="6">
    <source>
        <dbReference type="PROSITE-ProRule" id="PRU00192"/>
    </source>
</evidence>
<evidence type="ECO:0000256" key="7">
    <source>
        <dbReference type="SAM" id="MobiDB-lite"/>
    </source>
</evidence>
<evidence type="ECO:0000269" key="8">
    <source>
    </source>
</evidence>
<evidence type="ECO:0000269" key="9">
    <source>
    </source>
</evidence>
<evidence type="ECO:0000269" key="10">
    <source>
    </source>
</evidence>
<evidence type="ECO:0000269" key="11">
    <source>
    </source>
</evidence>
<evidence type="ECO:0000269" key="12">
    <source>
    </source>
</evidence>
<evidence type="ECO:0000269" key="13">
    <source>
    </source>
</evidence>
<evidence type="ECO:0000269" key="14">
    <source>
    </source>
</evidence>
<evidence type="ECO:0000269" key="15">
    <source>
    </source>
</evidence>
<evidence type="ECO:0000269" key="16">
    <source>
    </source>
</evidence>
<evidence type="ECO:0000303" key="17">
    <source>
    </source>
</evidence>
<evidence type="ECO:0000303" key="18">
    <source>
    </source>
</evidence>
<evidence type="ECO:0000303" key="19">
    <source>
    </source>
</evidence>
<evidence type="ECO:0000303" key="20">
    <source>
    </source>
</evidence>
<evidence type="ECO:0000303" key="21">
    <source>
    </source>
</evidence>
<evidence type="ECO:0000305" key="22"/>
<evidence type="ECO:0007744" key="23">
    <source>
    </source>
</evidence>
<evidence type="ECO:0007744" key="24">
    <source>
    </source>
</evidence>
<evidence type="ECO:0007744" key="25">
    <source>
    </source>
</evidence>
<evidence type="ECO:0007744" key="26">
    <source>
    </source>
</evidence>
<evidence type="ECO:0007744" key="27">
    <source>
    </source>
</evidence>
<evidence type="ECO:0007744" key="28">
    <source>
    </source>
</evidence>
<evidence type="ECO:0007744" key="29">
    <source>
    </source>
</evidence>
<evidence type="ECO:0007829" key="30">
    <source>
        <dbReference type="PDB" id="1BY1"/>
    </source>
</evidence>
<evidence type="ECO:0007829" key="31">
    <source>
        <dbReference type="PDB" id="2L3G"/>
    </source>
</evidence>
<evidence type="ECO:0007829" key="32">
    <source>
        <dbReference type="PDB" id="5SXP"/>
    </source>
</evidence>
<sequence length="803" mass="90012">MNSAEQTVTWLITLGVLESPKKTISDPEGFLQASLKDGVVLCRLLERLLPGTIEKVYPEPRSESECLSNIREFLRGCGASLRLELLFPPSQPPQHLVTTILLSASTFDANDLYQGQNFNKVLSSLVTLNKVTADIGLGSDSVCARPSSHRIKSFDSLGSQSLHTRTSKLFQGQYRSLDMTDNSNNQLVVRAKFNFQQTNEDELSFSKGDVIHVTRVEEGGWWEGTLNGRTGWFPSNYVREVKASEKPVSPKSGTLKSPPKGFDTTAINKSYYNVVLQNILETENEYSKELQTVLSTYLRPLQTSEKLSSANISYLMGNLEEICSFQQMLVQSLEECTKLPEAQQRVGGCFLNLMPQMKTLYLTYCANHPSAVNVLTEHSEELGEFMETKGASSPGILVLTTGLSKPFMRLDKYPTLLKELERHMEDYHTDRQDIQKSMAAFKNLSAQCQEVRKRKELELQILTEAIRNWEGDDIKTLGNVTYMSQVLIQCAGSEEKNERYLLLFPNVLLMLSASPRMSGFIYQGKLPTTGMTITKLEDSENHRNAFEISGSMIERILVSCNNQQDLQEWVEHLQKQTKVTSVGNPTIKPHSVPSHTLPSHPVTPSSKHADSKPAPLTPAYHTLPHPSHHGTPHTTINWGPLEPPKTPKPWSLSCLRPAPPLRPSAALCYKEDLSKSPKTMKKLLPKRKPERKPSDEEFASRKSTAALEEDAQILKVIEAYCTSAKTRQTLNSTWQGTDLMHNHVLADDDQPSLDSLGRRSSLSRLEPSDLSEDSDYDSIWTAHSYRMGSTSRKSCCSYISHQN</sequence>
<name>ARHG7_HUMAN</name>
<feature type="chain" id="PRO_0000080921" description="Rho guanine nucleotide exchange factor 7">
    <location>
        <begin position="1"/>
        <end position="803"/>
    </location>
</feature>
<feature type="domain" description="Calponin-homology (CH)" evidence="3">
    <location>
        <begin position="1"/>
        <end position="133"/>
    </location>
</feature>
<feature type="domain" description="SH3" evidence="6">
    <location>
        <begin position="184"/>
        <end position="243"/>
    </location>
</feature>
<feature type="domain" description="DH" evidence="4">
    <location>
        <begin position="271"/>
        <end position="451"/>
    </location>
</feature>
<feature type="domain" description="PH" evidence="5">
    <location>
        <begin position="473"/>
        <end position="578"/>
    </location>
</feature>
<feature type="region of interest" description="Disordered" evidence="7">
    <location>
        <begin position="580"/>
        <end position="655"/>
    </location>
</feature>
<feature type="region of interest" description="Disordered" evidence="7">
    <location>
        <begin position="678"/>
        <end position="704"/>
    </location>
</feature>
<feature type="region of interest" description="Disordered" evidence="7">
    <location>
        <begin position="748"/>
        <end position="773"/>
    </location>
</feature>
<feature type="compositionally biased region" description="Polar residues" evidence="7">
    <location>
        <begin position="593"/>
        <end position="606"/>
    </location>
</feature>
<feature type="compositionally biased region" description="Basic residues" evidence="7">
    <location>
        <begin position="678"/>
        <end position="690"/>
    </location>
</feature>
<feature type="compositionally biased region" description="Basic and acidic residues" evidence="7">
    <location>
        <begin position="691"/>
        <end position="700"/>
    </location>
</feature>
<feature type="compositionally biased region" description="Low complexity" evidence="7">
    <location>
        <begin position="752"/>
        <end position="765"/>
    </location>
</feature>
<feature type="modified residue" description="Phosphoserine" evidence="2">
    <location>
        <position position="153"/>
    </location>
</feature>
<feature type="modified residue" description="Phosphoserine" evidence="2">
    <location>
        <position position="176"/>
    </location>
</feature>
<feature type="modified residue" description="Phosphoserine" evidence="25">
    <location>
        <position position="249"/>
    </location>
</feature>
<feature type="modified residue" description="Phosphoserine" evidence="28">
    <location>
        <position position="257"/>
    </location>
</feature>
<feature type="modified residue" description="Phosphoserine" evidence="24 28">
    <location>
        <position position="518"/>
    </location>
</feature>
<feature type="modified residue" description="Phosphoserine; by CaMK1" evidence="10 23 25 28">
    <location>
        <position position="694"/>
    </location>
</feature>
<feature type="splice variant" id="VSP_011032" description="In isoform 1 and isoform 6." evidence="17 20 21">
    <location>
        <begin position="1"/>
        <end position="178"/>
    </location>
</feature>
<feature type="splice variant" id="VSP_011033" description="In isoform 2." evidence="17">
    <location>
        <begin position="56"/>
        <end position="105"/>
    </location>
</feature>
<feature type="splice variant" id="VSP_034639" description="In isoform 5." evidence="18">
    <location>
        <begin position="85"/>
        <end position="177"/>
    </location>
</feature>
<feature type="splice variant" id="VSP_011034" description="In isoform 3." evidence="19">
    <location>
        <begin position="85"/>
        <end position="105"/>
    </location>
</feature>
<feature type="splice variant" id="VSP_011035" description="In isoform 1 and isoform 5." evidence="17 18 20 21">
    <original>TWQGTDLMHNHVLADDDQPSLDSLGRRSSLSRLEPSDLSEDSDYDSIWTAHSYRMGSTSRKSCCSYISHQN</original>
    <variation>SSRKESAPQVLLPEEEKIIVEETKSNGQTVIEEKSLVDTVYALKDEVQELRQDNKKMKKSLEEEQRARKDLEKLVRKVLKNMNDPAWDETNL</variation>
    <location>
        <begin position="733"/>
        <end position="803"/>
    </location>
</feature>
<feature type="sequence variant" id="VAR_064694" description="Found in a clear cell renal carcinoma case; somatic mutation; dbSNP:rs2093313813." evidence="14">
    <original>T</original>
    <variation>A</variation>
    <location>
        <position position="790"/>
    </location>
</feature>
<feature type="sequence conflict" description="In Ref. 7; BAD66827." evidence="22" ref="7">
    <original>TIEK</original>
    <variation>EEKR</variation>
    <location>
        <begin position="52"/>
        <end position="55"/>
    </location>
</feature>
<feature type="sequence conflict" description="In Ref. 6; AAH33905." evidence="22" ref="6">
    <original>Q</original>
    <variation>K</variation>
    <location>
        <position position="343"/>
    </location>
</feature>
<feature type="sequence conflict" description="In Ref. 6; AAH33905." evidence="22" ref="6">
    <original>M</original>
    <variation>V</variation>
    <location>
        <position position="552"/>
    </location>
</feature>
<feature type="sequence conflict" description="In Ref. 7; BAD66827." evidence="22" ref="7">
    <original>H</original>
    <variation>D</variation>
    <location>
        <position position="595"/>
    </location>
</feature>
<feature type="sequence conflict" description="In Ref. 6; AAH50521." evidence="22" ref="6">
    <original>I</original>
    <variation>T</variation>
    <location>
        <position position="636"/>
    </location>
</feature>
<feature type="sequence conflict" description="In Ref. 6; AAH33905." evidence="22" ref="6">
    <original>M</original>
    <variation>L</variation>
    <location>
        <position position="740"/>
    </location>
</feature>
<feature type="helix" evidence="31">
    <location>
        <begin position="3"/>
        <end position="13"/>
    </location>
</feature>
<feature type="helix" evidence="31">
    <location>
        <begin position="27"/>
        <end position="35"/>
    </location>
</feature>
<feature type="helix" evidence="31">
    <location>
        <begin position="39"/>
        <end position="48"/>
    </location>
</feature>
<feature type="helix" evidence="31">
    <location>
        <begin position="63"/>
        <end position="79"/>
    </location>
</feature>
<feature type="helix" evidence="31">
    <location>
        <begin position="109"/>
        <end position="113"/>
    </location>
</feature>
<feature type="helix" evidence="31">
    <location>
        <begin position="118"/>
        <end position="135"/>
    </location>
</feature>
<feature type="strand" evidence="32">
    <location>
        <begin position="188"/>
        <end position="193"/>
    </location>
</feature>
<feature type="strand" evidence="32">
    <location>
        <begin position="210"/>
        <end position="216"/>
    </location>
</feature>
<feature type="strand" evidence="32">
    <location>
        <begin position="218"/>
        <end position="226"/>
    </location>
</feature>
<feature type="strand" evidence="32">
    <location>
        <begin position="229"/>
        <end position="234"/>
    </location>
</feature>
<feature type="helix" evidence="32">
    <location>
        <begin position="235"/>
        <end position="237"/>
    </location>
</feature>
<feature type="strand" evidence="32">
    <location>
        <begin position="238"/>
        <end position="240"/>
    </location>
</feature>
<feature type="helix" evidence="30">
    <location>
        <begin position="271"/>
        <end position="301"/>
    </location>
</feature>
<feature type="turn" evidence="30">
    <location>
        <begin position="302"/>
        <end position="304"/>
    </location>
</feature>
<feature type="strand" evidence="30">
    <location>
        <begin position="305"/>
        <end position="310"/>
    </location>
</feature>
<feature type="helix" evidence="30">
    <location>
        <begin position="311"/>
        <end position="313"/>
    </location>
</feature>
<feature type="helix" evidence="30">
    <location>
        <begin position="316"/>
        <end position="338"/>
    </location>
</feature>
<feature type="helix" evidence="30">
    <location>
        <begin position="346"/>
        <end position="378"/>
    </location>
</feature>
<feature type="turn" evidence="30">
    <location>
        <begin position="379"/>
        <end position="381"/>
    </location>
</feature>
<feature type="helix" evidence="30">
    <location>
        <begin position="382"/>
        <end position="385"/>
    </location>
</feature>
<feature type="turn" evidence="30">
    <location>
        <begin position="386"/>
        <end position="389"/>
    </location>
</feature>
<feature type="turn" evidence="30">
    <location>
        <begin position="395"/>
        <end position="397"/>
    </location>
</feature>
<feature type="helix" evidence="30">
    <location>
        <begin position="398"/>
        <end position="402"/>
    </location>
</feature>
<feature type="turn" evidence="30">
    <location>
        <begin position="406"/>
        <end position="408"/>
    </location>
</feature>
<feature type="helix" evidence="30">
    <location>
        <begin position="409"/>
        <end position="411"/>
    </location>
</feature>
<feature type="helix" evidence="30">
    <location>
        <begin position="413"/>
        <end position="422"/>
    </location>
</feature>
<feature type="strand" evidence="30">
    <location>
        <begin position="428"/>
        <end position="430"/>
    </location>
</feature>
<feature type="helix" evidence="30">
    <location>
        <begin position="432"/>
        <end position="453"/>
    </location>
</feature>
<feature type="turn" evidence="30">
    <location>
        <begin position="454"/>
        <end position="456"/>
    </location>
</feature>
<feature type="initiator methionine" description="Removed" evidence="26">
    <location sequence="Q14155-1">
        <position position="1"/>
    </location>
</feature>
<feature type="modified residue" description="N-acetylmethionine" evidence="27">
    <location sequence="Q14155-1">
        <position position="1"/>
    </location>
</feature>
<feature type="modified residue" description="N-acetylthreonine" evidence="26">
    <location sequence="Q14155-1">
        <position position="2"/>
    </location>
</feature>
<feature type="modified residue" description="Phosphoserine" evidence="25 29">
    <location sequence="Q14155-1">
        <position position="560"/>
    </location>
</feature>
<feature type="modified residue" description="Phosphoserine" evidence="25">
    <location sequence="Q14155-1">
        <position position="579"/>
    </location>
</feature>
<feature type="modified residue" description="Phosphoserine" evidence="25 29">
    <location sequence="Q14155-5">
        <position position="645"/>
    </location>
</feature>
<feature type="modified residue" description="Phosphoserine" evidence="25">
    <location sequence="Q14155-5">
        <position position="664"/>
    </location>
</feature>
<feature type="initiator methionine" description="Removed" evidence="26">
    <location sequence="Q14155-6">
        <position position="1"/>
    </location>
</feature>
<feature type="modified residue" description="N-acetylmethionine" evidence="27">
    <location sequence="Q14155-6">
        <position position="1"/>
    </location>
</feature>
<feature type="modified residue" description="N-acetylthreonine" evidence="26">
    <location sequence="Q14155-6">
        <position position="2"/>
    </location>
</feature>
<proteinExistence type="evidence at protein level"/>
<gene>
    <name type="primary">ARHGEF7</name>
    <name type="synonym">COOL1</name>
    <name type="synonym">KIAA0142</name>
    <name type="synonym">P85SPR</name>
    <name type="synonym">PAK3BP</name>
    <name type="synonym">PIXB</name>
    <name type="ORF">Nbla10314</name>
</gene>